<feature type="chain" id="PRO_0000265692" description="Elongation factor 4">
    <location>
        <begin position="1"/>
        <end position="603"/>
    </location>
</feature>
<feature type="domain" description="tr-type G">
    <location>
        <begin position="2"/>
        <end position="184"/>
    </location>
</feature>
<feature type="binding site" evidence="1">
    <location>
        <begin position="14"/>
        <end position="19"/>
    </location>
    <ligand>
        <name>GTP</name>
        <dbReference type="ChEBI" id="CHEBI:37565"/>
    </ligand>
</feature>
<feature type="binding site" evidence="1">
    <location>
        <begin position="131"/>
        <end position="134"/>
    </location>
    <ligand>
        <name>GTP</name>
        <dbReference type="ChEBI" id="CHEBI:37565"/>
    </ligand>
</feature>
<proteinExistence type="inferred from homology"/>
<gene>
    <name evidence="1" type="primary">lepA</name>
    <name type="ordered locus">Rfer_1740</name>
</gene>
<organism>
    <name type="scientific">Albidiferax ferrireducens (strain ATCC BAA-621 / DSM 15236 / T118)</name>
    <name type="common">Rhodoferax ferrireducens</name>
    <dbReference type="NCBI Taxonomy" id="338969"/>
    <lineage>
        <taxon>Bacteria</taxon>
        <taxon>Pseudomonadati</taxon>
        <taxon>Pseudomonadota</taxon>
        <taxon>Betaproteobacteria</taxon>
        <taxon>Burkholderiales</taxon>
        <taxon>Comamonadaceae</taxon>
        <taxon>Rhodoferax</taxon>
    </lineage>
</organism>
<evidence type="ECO:0000255" key="1">
    <source>
        <dbReference type="HAMAP-Rule" id="MF_00071"/>
    </source>
</evidence>
<accession>Q21XN4</accession>
<dbReference type="EC" id="3.6.5.n1" evidence="1"/>
<dbReference type="EMBL" id="CP000267">
    <property type="protein sequence ID" value="ABD69469.1"/>
    <property type="molecule type" value="Genomic_DNA"/>
</dbReference>
<dbReference type="RefSeq" id="WP_011464037.1">
    <property type="nucleotide sequence ID" value="NC_007908.1"/>
</dbReference>
<dbReference type="SMR" id="Q21XN4"/>
<dbReference type="STRING" id="338969.Rfer_1740"/>
<dbReference type="KEGG" id="rfr:Rfer_1740"/>
<dbReference type="eggNOG" id="COG0481">
    <property type="taxonomic scope" value="Bacteria"/>
</dbReference>
<dbReference type="HOGENOM" id="CLU_009995_3_3_4"/>
<dbReference type="OrthoDB" id="9801472at2"/>
<dbReference type="Proteomes" id="UP000008332">
    <property type="component" value="Chromosome"/>
</dbReference>
<dbReference type="GO" id="GO:0005886">
    <property type="term" value="C:plasma membrane"/>
    <property type="evidence" value="ECO:0007669"/>
    <property type="project" value="UniProtKB-SubCell"/>
</dbReference>
<dbReference type="GO" id="GO:0005525">
    <property type="term" value="F:GTP binding"/>
    <property type="evidence" value="ECO:0007669"/>
    <property type="project" value="UniProtKB-UniRule"/>
</dbReference>
<dbReference type="GO" id="GO:0003924">
    <property type="term" value="F:GTPase activity"/>
    <property type="evidence" value="ECO:0007669"/>
    <property type="project" value="UniProtKB-UniRule"/>
</dbReference>
<dbReference type="GO" id="GO:0097216">
    <property type="term" value="F:guanosine tetraphosphate binding"/>
    <property type="evidence" value="ECO:0007669"/>
    <property type="project" value="UniProtKB-ARBA"/>
</dbReference>
<dbReference type="GO" id="GO:0043022">
    <property type="term" value="F:ribosome binding"/>
    <property type="evidence" value="ECO:0007669"/>
    <property type="project" value="UniProtKB-UniRule"/>
</dbReference>
<dbReference type="GO" id="GO:0003746">
    <property type="term" value="F:translation elongation factor activity"/>
    <property type="evidence" value="ECO:0007669"/>
    <property type="project" value="UniProtKB-UniRule"/>
</dbReference>
<dbReference type="GO" id="GO:0045727">
    <property type="term" value="P:positive regulation of translation"/>
    <property type="evidence" value="ECO:0007669"/>
    <property type="project" value="UniProtKB-UniRule"/>
</dbReference>
<dbReference type="CDD" id="cd16260">
    <property type="entry name" value="EF4_III"/>
    <property type="match status" value="1"/>
</dbReference>
<dbReference type="CDD" id="cd01890">
    <property type="entry name" value="LepA"/>
    <property type="match status" value="1"/>
</dbReference>
<dbReference type="CDD" id="cd03709">
    <property type="entry name" value="lepA_C"/>
    <property type="match status" value="1"/>
</dbReference>
<dbReference type="FunFam" id="3.40.50.300:FF:000078">
    <property type="entry name" value="Elongation factor 4"/>
    <property type="match status" value="1"/>
</dbReference>
<dbReference type="FunFam" id="2.40.30.10:FF:000015">
    <property type="entry name" value="Translation factor GUF1, mitochondrial"/>
    <property type="match status" value="1"/>
</dbReference>
<dbReference type="FunFam" id="3.30.70.240:FF:000007">
    <property type="entry name" value="Translation factor GUF1, mitochondrial"/>
    <property type="match status" value="1"/>
</dbReference>
<dbReference type="FunFam" id="3.30.70.2570:FF:000001">
    <property type="entry name" value="Translation factor GUF1, mitochondrial"/>
    <property type="match status" value="1"/>
</dbReference>
<dbReference type="FunFam" id="3.30.70.870:FF:000004">
    <property type="entry name" value="Translation factor GUF1, mitochondrial"/>
    <property type="match status" value="1"/>
</dbReference>
<dbReference type="Gene3D" id="3.30.70.240">
    <property type="match status" value="1"/>
</dbReference>
<dbReference type="Gene3D" id="3.30.70.2570">
    <property type="entry name" value="Elongation factor 4, C-terminal domain"/>
    <property type="match status" value="1"/>
</dbReference>
<dbReference type="Gene3D" id="3.30.70.870">
    <property type="entry name" value="Elongation Factor G (Translational Gtpase), domain 3"/>
    <property type="match status" value="1"/>
</dbReference>
<dbReference type="Gene3D" id="3.40.50.300">
    <property type="entry name" value="P-loop containing nucleotide triphosphate hydrolases"/>
    <property type="match status" value="1"/>
</dbReference>
<dbReference type="Gene3D" id="2.40.30.10">
    <property type="entry name" value="Translation factors"/>
    <property type="match status" value="1"/>
</dbReference>
<dbReference type="HAMAP" id="MF_00071">
    <property type="entry name" value="LepA"/>
    <property type="match status" value="1"/>
</dbReference>
<dbReference type="InterPro" id="IPR006297">
    <property type="entry name" value="EF-4"/>
</dbReference>
<dbReference type="InterPro" id="IPR035647">
    <property type="entry name" value="EFG_III/V"/>
</dbReference>
<dbReference type="InterPro" id="IPR000640">
    <property type="entry name" value="EFG_V-like"/>
</dbReference>
<dbReference type="InterPro" id="IPR004161">
    <property type="entry name" value="EFTu-like_2"/>
</dbReference>
<dbReference type="InterPro" id="IPR031157">
    <property type="entry name" value="G_TR_CS"/>
</dbReference>
<dbReference type="InterPro" id="IPR038363">
    <property type="entry name" value="LepA_C_sf"/>
</dbReference>
<dbReference type="InterPro" id="IPR013842">
    <property type="entry name" value="LepA_CTD"/>
</dbReference>
<dbReference type="InterPro" id="IPR035654">
    <property type="entry name" value="LepA_IV"/>
</dbReference>
<dbReference type="InterPro" id="IPR027417">
    <property type="entry name" value="P-loop_NTPase"/>
</dbReference>
<dbReference type="InterPro" id="IPR005225">
    <property type="entry name" value="Small_GTP-bd"/>
</dbReference>
<dbReference type="InterPro" id="IPR000795">
    <property type="entry name" value="T_Tr_GTP-bd_dom"/>
</dbReference>
<dbReference type="InterPro" id="IPR009000">
    <property type="entry name" value="Transl_B-barrel_sf"/>
</dbReference>
<dbReference type="NCBIfam" id="TIGR01393">
    <property type="entry name" value="lepA"/>
    <property type="match status" value="1"/>
</dbReference>
<dbReference type="NCBIfam" id="TIGR00231">
    <property type="entry name" value="small_GTP"/>
    <property type="match status" value="1"/>
</dbReference>
<dbReference type="PANTHER" id="PTHR43512:SF4">
    <property type="entry name" value="TRANSLATION FACTOR GUF1 HOMOLOG, CHLOROPLASTIC"/>
    <property type="match status" value="1"/>
</dbReference>
<dbReference type="PANTHER" id="PTHR43512">
    <property type="entry name" value="TRANSLATION FACTOR GUF1-RELATED"/>
    <property type="match status" value="1"/>
</dbReference>
<dbReference type="Pfam" id="PF00679">
    <property type="entry name" value="EFG_C"/>
    <property type="match status" value="1"/>
</dbReference>
<dbReference type="Pfam" id="PF00009">
    <property type="entry name" value="GTP_EFTU"/>
    <property type="match status" value="1"/>
</dbReference>
<dbReference type="Pfam" id="PF03144">
    <property type="entry name" value="GTP_EFTU_D2"/>
    <property type="match status" value="1"/>
</dbReference>
<dbReference type="Pfam" id="PF06421">
    <property type="entry name" value="LepA_C"/>
    <property type="match status" value="1"/>
</dbReference>
<dbReference type="PRINTS" id="PR00315">
    <property type="entry name" value="ELONGATNFCT"/>
</dbReference>
<dbReference type="SMART" id="SM00838">
    <property type="entry name" value="EFG_C"/>
    <property type="match status" value="1"/>
</dbReference>
<dbReference type="SUPFAM" id="SSF54980">
    <property type="entry name" value="EF-G C-terminal domain-like"/>
    <property type="match status" value="2"/>
</dbReference>
<dbReference type="SUPFAM" id="SSF52540">
    <property type="entry name" value="P-loop containing nucleoside triphosphate hydrolases"/>
    <property type="match status" value="1"/>
</dbReference>
<dbReference type="SUPFAM" id="SSF50447">
    <property type="entry name" value="Translation proteins"/>
    <property type="match status" value="1"/>
</dbReference>
<dbReference type="PROSITE" id="PS00301">
    <property type="entry name" value="G_TR_1"/>
    <property type="match status" value="1"/>
</dbReference>
<dbReference type="PROSITE" id="PS51722">
    <property type="entry name" value="G_TR_2"/>
    <property type="match status" value="1"/>
</dbReference>
<reference key="1">
    <citation type="submission" date="2006-02" db="EMBL/GenBank/DDBJ databases">
        <title>Complete sequence of chromosome of Rhodoferax ferrireducens DSM 15236.</title>
        <authorList>
            <person name="Copeland A."/>
            <person name="Lucas S."/>
            <person name="Lapidus A."/>
            <person name="Barry K."/>
            <person name="Detter J.C."/>
            <person name="Glavina del Rio T."/>
            <person name="Hammon N."/>
            <person name="Israni S."/>
            <person name="Pitluck S."/>
            <person name="Brettin T."/>
            <person name="Bruce D."/>
            <person name="Han C."/>
            <person name="Tapia R."/>
            <person name="Gilna P."/>
            <person name="Kiss H."/>
            <person name="Schmutz J."/>
            <person name="Larimer F."/>
            <person name="Land M."/>
            <person name="Kyrpides N."/>
            <person name="Ivanova N."/>
            <person name="Richardson P."/>
        </authorList>
    </citation>
    <scope>NUCLEOTIDE SEQUENCE [LARGE SCALE GENOMIC DNA]</scope>
    <source>
        <strain>ATCC BAA-621 / DSM 15236 / T118</strain>
    </source>
</reference>
<sequence length="603" mass="66429">MNHIRNFSIIAHIDHGKSTLADRLIQRCGGLQEREMEAQVLDSMDIEKERGITIKAQTASLKYKAQNGQIYNLNLIDTPGHVDFSYEVSRSLSACEGALLVVDASQGVEAQTVANCYTALDLGVEVVPVLNKMDLPNADPDNAKIEIEDVIGIDATDAIACSAKTGMGIDEILEAVVARMPPPRGNPAGALRAMIVDSWFDTYVGVVMLVRVVDGRLAKGERIKMMATGTTYNADSLGVFTPANEPRESLEAGEVGYIIAGIRELQAAKVGDTITLIKAGTGGAAFTATEPLPGFKEIQPQVFAGLYPTEASEYESLRDSLEKLKLNDSSLRYQPEVSQALGFGFRCGFLGLLHMEIVQERLEREFDQDLITTAPSVEYQVVQADGTVKMVENPSKMPDQGRLDEVREPIVTVHLYMPQDYVGAVMTLANQKRGVQMNMAYHGRQVMLTYEMPLAEIVMDFFDKLKSVSRGYASMDYEFKEYRAADVVKVDILLNGDKVDALSIIVHRSQSQYRGRAVVSKMREIISRQMYDVAIQAAIGSNVIARETIKAMRKNVIAKCYGGDISRKHKLLDKQKEGKKRMKQIGSVSVPQEAFLAILQVDA</sequence>
<protein>
    <recommendedName>
        <fullName evidence="1">Elongation factor 4</fullName>
        <shortName evidence="1">EF-4</shortName>
        <ecNumber evidence="1">3.6.5.n1</ecNumber>
    </recommendedName>
    <alternativeName>
        <fullName evidence="1">Ribosomal back-translocase LepA</fullName>
    </alternativeName>
</protein>
<comment type="function">
    <text evidence="1">Required for accurate and efficient protein synthesis under certain stress conditions. May act as a fidelity factor of the translation reaction, by catalyzing a one-codon backward translocation of tRNAs on improperly translocated ribosomes. Back-translocation proceeds from a post-translocation (POST) complex to a pre-translocation (PRE) complex, thus giving elongation factor G a second chance to translocate the tRNAs correctly. Binds to ribosomes in a GTP-dependent manner.</text>
</comment>
<comment type="catalytic activity">
    <reaction evidence="1">
        <text>GTP + H2O = GDP + phosphate + H(+)</text>
        <dbReference type="Rhea" id="RHEA:19669"/>
        <dbReference type="ChEBI" id="CHEBI:15377"/>
        <dbReference type="ChEBI" id="CHEBI:15378"/>
        <dbReference type="ChEBI" id="CHEBI:37565"/>
        <dbReference type="ChEBI" id="CHEBI:43474"/>
        <dbReference type="ChEBI" id="CHEBI:58189"/>
        <dbReference type="EC" id="3.6.5.n1"/>
    </reaction>
</comment>
<comment type="subcellular location">
    <subcellularLocation>
        <location evidence="1">Cell inner membrane</location>
        <topology evidence="1">Peripheral membrane protein</topology>
        <orientation evidence="1">Cytoplasmic side</orientation>
    </subcellularLocation>
</comment>
<comment type="similarity">
    <text evidence="1">Belongs to the TRAFAC class translation factor GTPase superfamily. Classic translation factor GTPase family. LepA subfamily.</text>
</comment>
<name>LEPA_ALBFT</name>
<keyword id="KW-0997">Cell inner membrane</keyword>
<keyword id="KW-1003">Cell membrane</keyword>
<keyword id="KW-0342">GTP-binding</keyword>
<keyword id="KW-0378">Hydrolase</keyword>
<keyword id="KW-0472">Membrane</keyword>
<keyword id="KW-0547">Nucleotide-binding</keyword>
<keyword id="KW-0648">Protein biosynthesis</keyword>
<keyword id="KW-1185">Reference proteome</keyword>